<accession>Q9LTP5</accession>
<accession>Q41191</accession>
<comment type="function">
    <text evidence="3">Involved in organ growth by promoting cell elongation processes.</text>
</comment>
<comment type="subcellular location">
    <subcellularLocation>
        <location evidence="3">Vacuole</location>
    </subcellularLocation>
</comment>
<comment type="tissue specificity">
    <text evidence="4 5">Mostly expressed in immature seed pods, and, to a lower extent, in stems and leaves (PubMed:2152168). Present in phloem and epiderm in leaves, stems, flowers and fruits (PubMed:20195610).</text>
</comment>
<comment type="developmental stage">
    <text evidence="4">Expressed during somatic embryogenesis, especially in cells undergoing the first anatomical modifications leading to somatic embryo development. Also accumulates during zygotic embryo development. First detected at heart-shape-torpedo transition in the whole embryos. Developmentally regulated in cotyledons and hypocotyl, being restricted to the radicule in early and late torpedo, until the embryo reaches maturity. Gradual decrease at the seed coat during seed development. After fertilization, restricted to the seed coat and endosperm.</text>
</comment>
<comment type="induction">
    <text evidence="2 5">Accumulates in response to flooding stress (PubMed:2152168). Induced by salicylic acid (SA) and abscisic acid (ABA) (PubMed:18657431, PubMed:2152168). Stimulated by 16-hydroxypalmitic acid (HPA), a major component of cutin (PubMed:18657431).</text>
</comment>
<comment type="disruption phenotype">
    <text evidence="3">Reduced organ length (e.g. inflorescence axis and roots).</text>
</comment>
<gene>
    <name evidence="7" type="primary">GRP5</name>
    <name evidence="9" type="ordered locus">At3g20470</name>
    <name evidence="10" type="ORF">MQC12.26</name>
</gene>
<proteinExistence type="evidence at transcript level"/>
<keyword id="KW-1185">Reference proteome</keyword>
<keyword id="KW-0732">Signal</keyword>
<keyword id="KW-0926">Vacuole</keyword>
<organism evidence="10">
    <name type="scientific">Arabidopsis thaliana</name>
    <name type="common">Mouse-ear cress</name>
    <dbReference type="NCBI Taxonomy" id="3702"/>
    <lineage>
        <taxon>Eukaryota</taxon>
        <taxon>Viridiplantae</taxon>
        <taxon>Streptophyta</taxon>
        <taxon>Embryophyta</taxon>
        <taxon>Tracheophyta</taxon>
        <taxon>Spermatophyta</taxon>
        <taxon>Magnoliopsida</taxon>
        <taxon>eudicotyledons</taxon>
        <taxon>Gunneridae</taxon>
        <taxon>Pentapetalae</taxon>
        <taxon>rosids</taxon>
        <taxon>malvids</taxon>
        <taxon>Brassicales</taxon>
        <taxon>Brassicaceae</taxon>
        <taxon>Camelineae</taxon>
        <taxon>Arabidopsis</taxon>
    </lineage>
</organism>
<sequence>MASKSLFLVALLVGSFAFTSFASVANRKLKSGLEDQKTFFHHPGGGLGGGGGIGGGSGLGGGGGFGGGGGLGGGAGGGGGLGGGAGGGAGGGFGGGAGSGGGLGGGGGAGGGFGGGAGGGSGGGFGGGAGAGGGLGGGGGAGGGGGFGGGGGSGIGGGFGGGAGAGGGFGGGHH</sequence>
<evidence type="ECO:0000255" key="1"/>
<evidence type="ECO:0000269" key="2">
    <source>
    </source>
</evidence>
<evidence type="ECO:0000269" key="3">
    <source>
    </source>
</evidence>
<evidence type="ECO:0000269" key="4">
    <source>
    </source>
</evidence>
<evidence type="ECO:0000269" key="5">
    <source>
    </source>
</evidence>
<evidence type="ECO:0000303" key="6">
    <source>
    </source>
</evidence>
<evidence type="ECO:0000303" key="7">
    <source>
    </source>
</evidence>
<evidence type="ECO:0000305" key="8"/>
<evidence type="ECO:0000312" key="9">
    <source>
        <dbReference type="Araport" id="AT3G20470"/>
    </source>
</evidence>
<evidence type="ECO:0000312" key="10">
    <source>
        <dbReference type="EMBL" id="BAB02830.1"/>
    </source>
</evidence>
<reference key="1">
    <citation type="journal article" date="1990" name="Plant Cell">
        <title>Differential expression of five Arabidopsis genes encoding glycine-rich proteins.</title>
        <authorList>
            <person name="de Oliveira D.E."/>
            <person name="Seurinck J."/>
            <person name="Inze D."/>
            <person name="Van Montagu M."/>
            <person name="Botterman J."/>
        </authorList>
    </citation>
    <scope>NUCLEOTIDE SEQUENCE [MRNA]</scope>
    <scope>TISSUE SPECIFICITY</scope>
    <scope>INDUCTION BY ABSCISIC ACID AND FLOODING STRESS</scope>
</reference>
<reference key="2">
    <citation type="journal article" date="2000" name="DNA Res.">
        <title>Structural analysis of Arabidopsis thaliana chromosome 3. I. Sequence features of the regions of 4,504,864 bp covered by sixty P1 and TAC clones.</title>
        <authorList>
            <person name="Sato S."/>
            <person name="Nakamura Y."/>
            <person name="Kaneko T."/>
            <person name="Katoh T."/>
            <person name="Asamizu E."/>
            <person name="Tabata S."/>
        </authorList>
    </citation>
    <scope>NUCLEOTIDE SEQUENCE [LARGE SCALE GENOMIC DNA]</scope>
    <source>
        <strain>cv. Columbia</strain>
    </source>
</reference>
<reference key="3">
    <citation type="journal article" date="2017" name="Plant J.">
        <title>Araport11: a complete reannotation of the Arabidopsis thaliana reference genome.</title>
        <authorList>
            <person name="Cheng C.Y."/>
            <person name="Krishnakumar V."/>
            <person name="Chan A.P."/>
            <person name="Thibaud-Nissen F."/>
            <person name="Schobel S."/>
            <person name="Town C.D."/>
        </authorList>
    </citation>
    <scope>GENOME REANNOTATION</scope>
    <source>
        <strain>cv. Columbia</strain>
    </source>
</reference>
<reference key="4">
    <citation type="submission" date="2009-03" db="EMBL/GenBank/DDBJ databases">
        <title>ORF cloning and analysis of Arabidopsis transcription factor genes.</title>
        <authorList>
            <person name="Fujita M."/>
        </authorList>
    </citation>
    <scope>NUCLEOTIDE SEQUENCE [LARGE SCALE GENOMIC DNA]</scope>
</reference>
<reference key="5">
    <citation type="journal article" date="2003" name="Science">
        <title>Empirical analysis of transcriptional activity in the Arabidopsis genome.</title>
        <authorList>
            <person name="Yamada K."/>
            <person name="Lim J."/>
            <person name="Dale J.M."/>
            <person name="Chen H."/>
            <person name="Shinn P."/>
            <person name="Palm C.J."/>
            <person name="Southwick A.M."/>
            <person name="Wu H.C."/>
            <person name="Kim C.J."/>
            <person name="Nguyen M."/>
            <person name="Pham P.K."/>
            <person name="Cheuk R.F."/>
            <person name="Karlin-Newmann G."/>
            <person name="Liu S.X."/>
            <person name="Lam B."/>
            <person name="Sakano H."/>
            <person name="Wu T."/>
            <person name="Yu G."/>
            <person name="Miranda M."/>
            <person name="Quach H.L."/>
            <person name="Tripp M."/>
            <person name="Chang C.H."/>
            <person name="Lee J.M."/>
            <person name="Toriumi M.J."/>
            <person name="Chan M.M."/>
            <person name="Tang C.C."/>
            <person name="Onodera C.S."/>
            <person name="Deng J.M."/>
            <person name="Akiyama K."/>
            <person name="Ansari Y."/>
            <person name="Arakawa T."/>
            <person name="Banh J."/>
            <person name="Banno F."/>
            <person name="Bowser L."/>
            <person name="Brooks S.Y."/>
            <person name="Carninci P."/>
            <person name="Chao Q."/>
            <person name="Choy N."/>
            <person name="Enju A."/>
            <person name="Goldsmith A.D."/>
            <person name="Gurjal M."/>
            <person name="Hansen N.F."/>
            <person name="Hayashizaki Y."/>
            <person name="Johnson-Hopson C."/>
            <person name="Hsuan V.W."/>
            <person name="Iida K."/>
            <person name="Karnes M."/>
            <person name="Khan S."/>
            <person name="Koesema E."/>
            <person name="Ishida J."/>
            <person name="Jiang P.X."/>
            <person name="Jones T."/>
            <person name="Kawai J."/>
            <person name="Kamiya A."/>
            <person name="Meyers C."/>
            <person name="Nakajima M."/>
            <person name="Narusaka M."/>
            <person name="Seki M."/>
            <person name="Sakurai T."/>
            <person name="Satou M."/>
            <person name="Tamse R."/>
            <person name="Vaysberg M."/>
            <person name="Wallender E.K."/>
            <person name="Wong C."/>
            <person name="Yamamura Y."/>
            <person name="Yuan S."/>
            <person name="Shinozaki K."/>
            <person name="Davis R.W."/>
            <person name="Theologis A."/>
            <person name="Ecker J.R."/>
        </authorList>
    </citation>
    <scope>NUCLEOTIDE SEQUENCE [LARGE SCALE MRNA]</scope>
    <source>
        <strain>cv. Columbia</strain>
    </source>
</reference>
<reference key="6">
    <citation type="journal article" date="2008" name="Plant Physiol. Biochem.">
        <title>Expression of glycine-rich protein genes, AtGRP5 and AtGRP23, induced by the cutin monomer 16-hydroxypalmitic acid in Arabidopsis thaliana.</title>
        <authorList>
            <person name="Park J.H."/>
            <person name="Suh M.C."/>
            <person name="Kim T.H."/>
            <person name="Kim M.C."/>
            <person name="Cho S.H."/>
        </authorList>
    </citation>
    <scope>INDUCTION BY HPA; SALICYLIC ACID AND ABSCISIC ACID</scope>
</reference>
<reference key="7">
    <citation type="journal article" date="2009" name="Planta">
        <title>AtGRP5, a vacuole-located glycine-rich protein involved in cell elongation.</title>
        <authorList>
            <person name="Mangeon A."/>
            <person name="Magioli C."/>
            <person name="Menezes-Salgueiro A.D."/>
            <person name="Cardeal V."/>
            <person name="de Oliveira C."/>
            <person name="Galvao V.C."/>
            <person name="Margis R."/>
            <person name="Engler G."/>
            <person name="Sachetto-Martins G."/>
        </authorList>
    </citation>
    <scope>FUNCTION</scope>
    <scope>DISRUPTION PHENOTYPE</scope>
    <scope>SUBCELLULAR LOCATION</scope>
    <source>
        <strain>cv. C24</strain>
        <strain>cv. Columbia</strain>
    </source>
</reference>
<reference key="8">
    <citation type="journal article" date="2010" name="Plant Cell Rep.">
        <title>The tissue expression pattern of the AtGRP5 regulatory region is controlled by a combination of positive and negative elements.</title>
        <authorList>
            <person name="Mangeon A."/>
            <person name="Magioli C."/>
            <person name="Tarre E."/>
            <person name="Cardeal V."/>
            <person name="Araujo C."/>
            <person name="Falkenbach E."/>
            <person name="Rocha C.A."/>
            <person name="Rangel-Lima C."/>
            <person name="Sachetto-Martins G."/>
        </authorList>
    </citation>
    <scope>DEVELOPMENTAL STAGE</scope>
    <scope>TISSUE SPECIFICITY</scope>
    <source>
        <strain>cv. C24</strain>
    </source>
</reference>
<feature type="signal peptide" evidence="1">
    <location>
        <begin position="1"/>
        <end position="22"/>
    </location>
</feature>
<feature type="chain" id="PRO_5006752047" description="Glycine-rich protein 5" evidence="1">
    <location>
        <begin position="23"/>
        <end position="174"/>
    </location>
</feature>
<feature type="sequence conflict" description="In Ref. 1; AAB24077." evidence="8" ref="1">
    <location>
        <position position="1"/>
    </location>
</feature>
<feature type="sequence conflict" description="In Ref. 1; AAB24077." evidence="8" ref="1">
    <original>G</original>
    <variation>S</variation>
    <location>
        <position position="44"/>
    </location>
</feature>
<feature type="sequence conflict" description="In Ref. 1; AAB24077." evidence="8" ref="1">
    <original>S</original>
    <variation>G</variation>
    <location>
        <position position="99"/>
    </location>
</feature>
<protein>
    <recommendedName>
        <fullName evidence="7">Glycine-rich protein 5</fullName>
        <shortName evidence="7">AtGRP-5</shortName>
        <shortName evidence="6">AtGRP5</shortName>
    </recommendedName>
</protein>
<name>GRP5_ARATH</name>
<dbReference type="EMBL" id="S47414">
    <property type="protein sequence ID" value="AAB24077.1"/>
    <property type="molecule type" value="mRNA"/>
</dbReference>
<dbReference type="EMBL" id="AB024036">
    <property type="protein sequence ID" value="BAB02830.1"/>
    <property type="molecule type" value="Genomic_DNA"/>
</dbReference>
<dbReference type="EMBL" id="CP002686">
    <property type="protein sequence ID" value="AEE76383.1"/>
    <property type="molecule type" value="Genomic_DNA"/>
</dbReference>
<dbReference type="EMBL" id="AB493624">
    <property type="protein sequence ID" value="BAH30462.1"/>
    <property type="molecule type" value="Genomic_DNA"/>
</dbReference>
<dbReference type="EMBL" id="AY045629">
    <property type="protein sequence ID" value="AAK73987.1"/>
    <property type="molecule type" value="mRNA"/>
</dbReference>
<dbReference type="EMBL" id="AY058226">
    <property type="protein sequence ID" value="AAL15400.1"/>
    <property type="molecule type" value="mRNA"/>
</dbReference>
<dbReference type="PIR" id="JQ1064">
    <property type="entry name" value="JQ1064"/>
</dbReference>
<dbReference type="RefSeq" id="NP_188682.1">
    <property type="nucleotide sequence ID" value="NM_112938.4"/>
</dbReference>
<dbReference type="SMR" id="Q9LTP5"/>
<dbReference type="IntAct" id="Q9LTP5">
    <property type="interactions" value="1"/>
</dbReference>
<dbReference type="STRING" id="3702.Q9LTP5"/>
<dbReference type="PaxDb" id="3702-AT3G20470.1"/>
<dbReference type="EnsemblPlants" id="AT3G20470.1">
    <property type="protein sequence ID" value="AT3G20470.1"/>
    <property type="gene ID" value="AT3G20470"/>
</dbReference>
<dbReference type="GeneID" id="3768804"/>
<dbReference type="Gramene" id="AT3G20470.1">
    <property type="protein sequence ID" value="AT3G20470.1"/>
    <property type="gene ID" value="AT3G20470"/>
</dbReference>
<dbReference type="KEGG" id="ath:AT3G20470"/>
<dbReference type="Araport" id="AT3G20470"/>
<dbReference type="TAIR" id="AT3G20470">
    <property type="gene designation" value="GRP5"/>
</dbReference>
<dbReference type="eggNOG" id="ENOG502RCT3">
    <property type="taxonomic scope" value="Eukaryota"/>
</dbReference>
<dbReference type="HOGENOM" id="CLU_1463277_0_0_1"/>
<dbReference type="InParanoid" id="Q9LTP5"/>
<dbReference type="OMA" id="CQGEDLG"/>
<dbReference type="PRO" id="PR:Q9LTP5"/>
<dbReference type="Proteomes" id="UP000006548">
    <property type="component" value="Chromosome 3"/>
</dbReference>
<dbReference type="ExpressionAtlas" id="Q9LTP5">
    <property type="expression patterns" value="baseline and differential"/>
</dbReference>
<dbReference type="GO" id="GO:0009505">
    <property type="term" value="C:plant-type cell wall"/>
    <property type="evidence" value="ECO:0000304"/>
    <property type="project" value="TAIR"/>
</dbReference>
<dbReference type="GO" id="GO:0000325">
    <property type="term" value="C:plant-type vacuole"/>
    <property type="evidence" value="ECO:0000314"/>
    <property type="project" value="UniProtKB"/>
</dbReference>
<dbReference type="GO" id="GO:0005199">
    <property type="term" value="F:structural constituent of cell wall"/>
    <property type="evidence" value="ECO:0000304"/>
    <property type="project" value="TAIR"/>
</dbReference>
<dbReference type="GO" id="GO:0030307">
    <property type="term" value="P:positive regulation of cell growth"/>
    <property type="evidence" value="ECO:0000315"/>
    <property type="project" value="UniProtKB"/>
</dbReference>
<dbReference type="GO" id="GO:0046622">
    <property type="term" value="P:positive regulation of organ growth"/>
    <property type="evidence" value="ECO:0000315"/>
    <property type="project" value="UniProtKB"/>
</dbReference>
<dbReference type="GO" id="GO:0009737">
    <property type="term" value="P:response to abscisic acid"/>
    <property type="evidence" value="ECO:0000270"/>
    <property type="project" value="UniProtKB"/>
</dbReference>
<dbReference type="GO" id="GO:0009413">
    <property type="term" value="P:response to flooding"/>
    <property type="evidence" value="ECO:0000270"/>
    <property type="project" value="UniProtKB"/>
</dbReference>
<dbReference type="GO" id="GO:0009751">
    <property type="term" value="P:response to salicylic acid"/>
    <property type="evidence" value="ECO:0000270"/>
    <property type="project" value="TAIR"/>
</dbReference>
<dbReference type="InterPro" id="IPR053329">
    <property type="entry name" value="Merozoite_Surface_Assoc"/>
</dbReference>
<dbReference type="PANTHER" id="PTHR39110:SF5">
    <property type="entry name" value="GLYCINE-RICH PROTEIN 5"/>
    <property type="match status" value="1"/>
</dbReference>
<dbReference type="PANTHER" id="PTHR39110">
    <property type="entry name" value="TRANSMEMBRANE PROTEIN"/>
    <property type="match status" value="1"/>
</dbReference>
<dbReference type="PRINTS" id="PR01228">
    <property type="entry name" value="EGGSHELL"/>
</dbReference>